<name>SYGA_NITSB</name>
<proteinExistence type="inferred from homology"/>
<reference key="1">
    <citation type="journal article" date="2007" name="Proc. Natl. Acad. Sci. U.S.A.">
        <title>Deep-sea vent epsilon-proteobacterial genomes provide insights into emergence of pathogens.</title>
        <authorList>
            <person name="Nakagawa S."/>
            <person name="Takaki Y."/>
            <person name="Shimamura S."/>
            <person name="Reysenbach A.-L."/>
            <person name="Takai K."/>
            <person name="Horikoshi K."/>
        </authorList>
    </citation>
    <scope>NUCLEOTIDE SEQUENCE [LARGE SCALE GENOMIC DNA]</scope>
    <source>
        <strain>SB155-2</strain>
    </source>
</reference>
<feature type="chain" id="PRO_1000047452" description="Glycine--tRNA ligase alpha subunit">
    <location>
        <begin position="1"/>
        <end position="290"/>
    </location>
</feature>
<comment type="catalytic activity">
    <reaction evidence="1">
        <text>tRNA(Gly) + glycine + ATP = glycyl-tRNA(Gly) + AMP + diphosphate</text>
        <dbReference type="Rhea" id="RHEA:16013"/>
        <dbReference type="Rhea" id="RHEA-COMP:9664"/>
        <dbReference type="Rhea" id="RHEA-COMP:9683"/>
        <dbReference type="ChEBI" id="CHEBI:30616"/>
        <dbReference type="ChEBI" id="CHEBI:33019"/>
        <dbReference type="ChEBI" id="CHEBI:57305"/>
        <dbReference type="ChEBI" id="CHEBI:78442"/>
        <dbReference type="ChEBI" id="CHEBI:78522"/>
        <dbReference type="ChEBI" id="CHEBI:456215"/>
        <dbReference type="EC" id="6.1.1.14"/>
    </reaction>
</comment>
<comment type="subunit">
    <text evidence="1">Tetramer of two alpha and two beta subunits.</text>
</comment>
<comment type="subcellular location">
    <subcellularLocation>
        <location evidence="1">Cytoplasm</location>
    </subcellularLocation>
</comment>
<comment type="similarity">
    <text evidence="1">Belongs to the class-II aminoacyl-tRNA synthetase family.</text>
</comment>
<dbReference type="EC" id="6.1.1.14" evidence="1"/>
<dbReference type="EMBL" id="AP009178">
    <property type="protein sequence ID" value="BAF70618.1"/>
    <property type="molecule type" value="Genomic_DNA"/>
</dbReference>
<dbReference type="RefSeq" id="WP_012082881.1">
    <property type="nucleotide sequence ID" value="NC_009662.1"/>
</dbReference>
<dbReference type="SMR" id="A6Q559"/>
<dbReference type="FunCoup" id="A6Q559">
    <property type="interactions" value="334"/>
</dbReference>
<dbReference type="STRING" id="387092.NIS_1511"/>
<dbReference type="KEGG" id="nis:NIS_1511"/>
<dbReference type="eggNOG" id="COG0752">
    <property type="taxonomic scope" value="Bacteria"/>
</dbReference>
<dbReference type="HOGENOM" id="CLU_057066_1_0_7"/>
<dbReference type="InParanoid" id="A6Q559"/>
<dbReference type="OrthoDB" id="9802183at2"/>
<dbReference type="Proteomes" id="UP000001118">
    <property type="component" value="Chromosome"/>
</dbReference>
<dbReference type="GO" id="GO:0005829">
    <property type="term" value="C:cytosol"/>
    <property type="evidence" value="ECO:0007669"/>
    <property type="project" value="TreeGrafter"/>
</dbReference>
<dbReference type="GO" id="GO:0005524">
    <property type="term" value="F:ATP binding"/>
    <property type="evidence" value="ECO:0007669"/>
    <property type="project" value="UniProtKB-UniRule"/>
</dbReference>
<dbReference type="GO" id="GO:0004820">
    <property type="term" value="F:glycine-tRNA ligase activity"/>
    <property type="evidence" value="ECO:0007669"/>
    <property type="project" value="UniProtKB-UniRule"/>
</dbReference>
<dbReference type="GO" id="GO:0006426">
    <property type="term" value="P:glycyl-tRNA aminoacylation"/>
    <property type="evidence" value="ECO:0007669"/>
    <property type="project" value="UniProtKB-UniRule"/>
</dbReference>
<dbReference type="CDD" id="cd00733">
    <property type="entry name" value="GlyRS_alpha_core"/>
    <property type="match status" value="1"/>
</dbReference>
<dbReference type="FunFam" id="3.30.930.10:FF:000006">
    <property type="entry name" value="Glycine--tRNA ligase alpha subunit"/>
    <property type="match status" value="1"/>
</dbReference>
<dbReference type="Gene3D" id="3.30.930.10">
    <property type="entry name" value="Bira Bifunctional Protein, Domain 2"/>
    <property type="match status" value="1"/>
</dbReference>
<dbReference type="Gene3D" id="1.20.58.180">
    <property type="entry name" value="Class II aaRS and biotin synthetases, domain 2"/>
    <property type="match status" value="1"/>
</dbReference>
<dbReference type="HAMAP" id="MF_00254">
    <property type="entry name" value="Gly_tRNA_synth_alpha"/>
    <property type="match status" value="1"/>
</dbReference>
<dbReference type="InterPro" id="IPR045864">
    <property type="entry name" value="aa-tRNA-synth_II/BPL/LPL"/>
</dbReference>
<dbReference type="InterPro" id="IPR006194">
    <property type="entry name" value="Gly-tRNA-synth_heterodimer"/>
</dbReference>
<dbReference type="InterPro" id="IPR002310">
    <property type="entry name" value="Gly-tRNA_ligase_asu"/>
</dbReference>
<dbReference type="NCBIfam" id="TIGR00388">
    <property type="entry name" value="glyQ"/>
    <property type="match status" value="1"/>
</dbReference>
<dbReference type="NCBIfam" id="NF006827">
    <property type="entry name" value="PRK09348.1"/>
    <property type="match status" value="1"/>
</dbReference>
<dbReference type="PANTHER" id="PTHR30075:SF2">
    <property type="entry name" value="GLYCINE--TRNA LIGASE, CHLOROPLASTIC_MITOCHONDRIAL 2"/>
    <property type="match status" value="1"/>
</dbReference>
<dbReference type="PANTHER" id="PTHR30075">
    <property type="entry name" value="GLYCYL-TRNA SYNTHETASE"/>
    <property type="match status" value="1"/>
</dbReference>
<dbReference type="Pfam" id="PF02091">
    <property type="entry name" value="tRNA-synt_2e"/>
    <property type="match status" value="1"/>
</dbReference>
<dbReference type="PRINTS" id="PR01044">
    <property type="entry name" value="TRNASYNTHGA"/>
</dbReference>
<dbReference type="SUPFAM" id="SSF55681">
    <property type="entry name" value="Class II aaRS and biotin synthetases"/>
    <property type="match status" value="1"/>
</dbReference>
<dbReference type="PROSITE" id="PS50861">
    <property type="entry name" value="AA_TRNA_LIGASE_II_GLYAB"/>
    <property type="match status" value="1"/>
</dbReference>
<gene>
    <name evidence="1" type="primary">glyQ</name>
    <name type="ordered locus">NIS_1511</name>
</gene>
<keyword id="KW-0030">Aminoacyl-tRNA synthetase</keyword>
<keyword id="KW-0067">ATP-binding</keyword>
<keyword id="KW-0963">Cytoplasm</keyword>
<keyword id="KW-0436">Ligase</keyword>
<keyword id="KW-0547">Nucleotide-binding</keyword>
<keyword id="KW-0648">Protein biosynthesis</keyword>
<keyword id="KW-1185">Reference proteome</keyword>
<evidence type="ECO:0000255" key="1">
    <source>
        <dbReference type="HAMAP-Rule" id="MF_00254"/>
    </source>
</evidence>
<sequence length="290" mass="33392">MITFSELLLKLQDFWAKQGCTIVQPYDFPSGAGTFHPATFLKSLDSKPWATAYVAPSRRPTDGRYGENPNRLGAYYQFQVLIKPSPDNIQDLYLKSLEALGLDWRKHDIRFVEDNWESPTLGAWGLGWEVWLDGMEVTQFTYFQQVGGFECDPVAVEITYGTERLAMYLQEVESVFDIVWSKNGGHIVTYADVHKRGEFEYSRYNFEVADTKMLFDWFEDASRECKRCLEEKLPLPAYDYCLLASHIFNTLDARKAISVTERQNFILKVRELAKGCAEVYKESLGELSEA</sequence>
<protein>
    <recommendedName>
        <fullName evidence="1">Glycine--tRNA ligase alpha subunit</fullName>
        <ecNumber evidence="1">6.1.1.14</ecNumber>
    </recommendedName>
    <alternativeName>
        <fullName evidence="1">Glycyl-tRNA synthetase alpha subunit</fullName>
        <shortName evidence="1">GlyRS</shortName>
    </alternativeName>
</protein>
<accession>A6Q559</accession>
<organism>
    <name type="scientific">Nitratiruptor sp. (strain SB155-2)</name>
    <dbReference type="NCBI Taxonomy" id="387092"/>
    <lineage>
        <taxon>Bacteria</taxon>
        <taxon>Pseudomonadati</taxon>
        <taxon>Campylobacterota</taxon>
        <taxon>Epsilonproteobacteria</taxon>
        <taxon>Nautiliales</taxon>
        <taxon>Nitratiruptoraceae</taxon>
        <taxon>Nitratiruptor</taxon>
    </lineage>
</organism>